<organism>
    <name type="scientific">Shouchella clausii (strain KSM-K16)</name>
    <name type="common">Alkalihalobacillus clausii</name>
    <dbReference type="NCBI Taxonomy" id="66692"/>
    <lineage>
        <taxon>Bacteria</taxon>
        <taxon>Bacillati</taxon>
        <taxon>Bacillota</taxon>
        <taxon>Bacilli</taxon>
        <taxon>Bacillales</taxon>
        <taxon>Bacillaceae</taxon>
        <taxon>Shouchella</taxon>
    </lineage>
</organism>
<dbReference type="EMBL" id="AP006627">
    <property type="protein sequence ID" value="BAD64777.1"/>
    <property type="molecule type" value="Genomic_DNA"/>
</dbReference>
<dbReference type="RefSeq" id="WP_011247085.1">
    <property type="nucleotide sequence ID" value="NC_006582.1"/>
</dbReference>
<dbReference type="SMR" id="Q5WFS8"/>
<dbReference type="STRING" id="66692.ABC2242"/>
<dbReference type="KEGG" id="bcl:ABC2242"/>
<dbReference type="eggNOG" id="COG0052">
    <property type="taxonomic scope" value="Bacteria"/>
</dbReference>
<dbReference type="HOGENOM" id="CLU_040318_1_2_9"/>
<dbReference type="OrthoDB" id="9808036at2"/>
<dbReference type="Proteomes" id="UP000001168">
    <property type="component" value="Chromosome"/>
</dbReference>
<dbReference type="GO" id="GO:0022627">
    <property type="term" value="C:cytosolic small ribosomal subunit"/>
    <property type="evidence" value="ECO:0007669"/>
    <property type="project" value="TreeGrafter"/>
</dbReference>
<dbReference type="GO" id="GO:0003735">
    <property type="term" value="F:structural constituent of ribosome"/>
    <property type="evidence" value="ECO:0007669"/>
    <property type="project" value="InterPro"/>
</dbReference>
<dbReference type="GO" id="GO:0006412">
    <property type="term" value="P:translation"/>
    <property type="evidence" value="ECO:0007669"/>
    <property type="project" value="UniProtKB-UniRule"/>
</dbReference>
<dbReference type="CDD" id="cd01425">
    <property type="entry name" value="RPS2"/>
    <property type="match status" value="1"/>
</dbReference>
<dbReference type="FunFam" id="1.10.287.610:FF:000001">
    <property type="entry name" value="30S ribosomal protein S2"/>
    <property type="match status" value="1"/>
</dbReference>
<dbReference type="Gene3D" id="3.40.50.10490">
    <property type="entry name" value="Glucose-6-phosphate isomerase like protein, domain 1"/>
    <property type="match status" value="1"/>
</dbReference>
<dbReference type="Gene3D" id="1.10.287.610">
    <property type="entry name" value="Helix hairpin bin"/>
    <property type="match status" value="1"/>
</dbReference>
<dbReference type="HAMAP" id="MF_00291_B">
    <property type="entry name" value="Ribosomal_uS2_B"/>
    <property type="match status" value="1"/>
</dbReference>
<dbReference type="InterPro" id="IPR001865">
    <property type="entry name" value="Ribosomal_uS2"/>
</dbReference>
<dbReference type="InterPro" id="IPR005706">
    <property type="entry name" value="Ribosomal_uS2_bac/mit/plastid"/>
</dbReference>
<dbReference type="InterPro" id="IPR018130">
    <property type="entry name" value="Ribosomal_uS2_CS"/>
</dbReference>
<dbReference type="InterPro" id="IPR023591">
    <property type="entry name" value="Ribosomal_uS2_flav_dom_sf"/>
</dbReference>
<dbReference type="NCBIfam" id="TIGR01011">
    <property type="entry name" value="rpsB_bact"/>
    <property type="match status" value="1"/>
</dbReference>
<dbReference type="PANTHER" id="PTHR12534">
    <property type="entry name" value="30S RIBOSOMAL PROTEIN S2 PROKARYOTIC AND ORGANELLAR"/>
    <property type="match status" value="1"/>
</dbReference>
<dbReference type="PANTHER" id="PTHR12534:SF0">
    <property type="entry name" value="SMALL RIBOSOMAL SUBUNIT PROTEIN US2M"/>
    <property type="match status" value="1"/>
</dbReference>
<dbReference type="Pfam" id="PF00318">
    <property type="entry name" value="Ribosomal_S2"/>
    <property type="match status" value="1"/>
</dbReference>
<dbReference type="PRINTS" id="PR00395">
    <property type="entry name" value="RIBOSOMALS2"/>
</dbReference>
<dbReference type="SUPFAM" id="SSF52313">
    <property type="entry name" value="Ribosomal protein S2"/>
    <property type="match status" value="1"/>
</dbReference>
<dbReference type="PROSITE" id="PS00962">
    <property type="entry name" value="RIBOSOMAL_S2_1"/>
    <property type="match status" value="1"/>
</dbReference>
<dbReference type="PROSITE" id="PS00963">
    <property type="entry name" value="RIBOSOMAL_S2_2"/>
    <property type="match status" value="1"/>
</dbReference>
<proteinExistence type="inferred from homology"/>
<evidence type="ECO:0000255" key="1">
    <source>
        <dbReference type="HAMAP-Rule" id="MF_00291"/>
    </source>
</evidence>
<evidence type="ECO:0000305" key="2"/>
<accession>Q5WFS8</accession>
<comment type="similarity">
    <text evidence="1">Belongs to the universal ribosomal protein uS2 family.</text>
</comment>
<feature type="chain" id="PRO_0000134129" description="Small ribosomal subunit protein uS2">
    <location>
        <begin position="1"/>
        <end position="242"/>
    </location>
</feature>
<name>RS2_SHOC1</name>
<reference key="1">
    <citation type="submission" date="2003-10" db="EMBL/GenBank/DDBJ databases">
        <title>The complete genome sequence of the alkaliphilic Bacillus clausii KSM-K16.</title>
        <authorList>
            <person name="Takaki Y."/>
            <person name="Kageyama Y."/>
            <person name="Shimamura S."/>
            <person name="Suzuki H."/>
            <person name="Nishi S."/>
            <person name="Hatada Y."/>
            <person name="Kawai S."/>
            <person name="Ito S."/>
            <person name="Horikoshi K."/>
        </authorList>
    </citation>
    <scope>NUCLEOTIDE SEQUENCE [LARGE SCALE GENOMIC DNA]</scope>
    <source>
        <strain>KSM-K16</strain>
    </source>
</reference>
<sequence>MAVISMKQLLEAGVHFGHQTRRWNPKMDRYIFTERNGIYIIDLQKTVKKVETAYNFVRDLAADGGKILFVGTKKQAQDSVRDEAIRCGMYYINQRWLGGTLTNFETIQKRITRLKNLEKMQEDGTFDVLPKKEVILLKKEMDRLEKFLGGIKDMNGVPDALFVIDPRKERIAIAEAHKLNIPIVAIVDTNCDPDEIDYVIPGNDDAIRAVKLLTGKMADAVIEATAGESEEEVDVEEETTTA</sequence>
<gene>
    <name evidence="1" type="primary">rpsB</name>
    <name type="ordered locus">ABC2242</name>
</gene>
<protein>
    <recommendedName>
        <fullName evidence="1">Small ribosomal subunit protein uS2</fullName>
    </recommendedName>
    <alternativeName>
        <fullName evidence="2">30S ribosomal protein S2</fullName>
    </alternativeName>
</protein>
<keyword id="KW-1185">Reference proteome</keyword>
<keyword id="KW-0687">Ribonucleoprotein</keyword>
<keyword id="KW-0689">Ribosomal protein</keyword>